<proteinExistence type="inferred from homology"/>
<keyword id="KW-0687">Ribonucleoprotein</keyword>
<keyword id="KW-0689">Ribosomal protein</keyword>
<keyword id="KW-0694">RNA-binding</keyword>
<keyword id="KW-0699">rRNA-binding</keyword>
<keyword id="KW-0820">tRNA-binding</keyword>
<evidence type="ECO:0000255" key="1">
    <source>
        <dbReference type="HAMAP-Rule" id="MF_01333"/>
    </source>
</evidence>
<evidence type="ECO:0000305" key="2"/>
<gene>
    <name evidence="1" type="primary">rplE</name>
    <name type="ordered locus">Dvul_1753</name>
</gene>
<name>RL5_NITV4</name>
<reference key="1">
    <citation type="journal article" date="2009" name="Environ. Microbiol.">
        <title>Contribution of mobile genetic elements to Desulfovibrio vulgaris genome plasticity.</title>
        <authorList>
            <person name="Walker C.B."/>
            <person name="Stolyar S."/>
            <person name="Chivian D."/>
            <person name="Pinel N."/>
            <person name="Gabster J.A."/>
            <person name="Dehal P.S."/>
            <person name="He Z."/>
            <person name="Yang Z.K."/>
            <person name="Yen H.C."/>
            <person name="Zhou J."/>
            <person name="Wall J.D."/>
            <person name="Hazen T.C."/>
            <person name="Arkin A.P."/>
            <person name="Stahl D.A."/>
        </authorList>
    </citation>
    <scope>NUCLEOTIDE SEQUENCE [LARGE SCALE GENOMIC DNA]</scope>
    <source>
        <strain>DP4</strain>
    </source>
</reference>
<feature type="chain" id="PRO_1000052728" description="Large ribosomal subunit protein uL5">
    <location>
        <begin position="1"/>
        <end position="179"/>
    </location>
</feature>
<organism>
    <name type="scientific">Nitratidesulfovibrio vulgaris (strain DP4)</name>
    <name type="common">Desulfovibrio vulgaris</name>
    <dbReference type="NCBI Taxonomy" id="391774"/>
    <lineage>
        <taxon>Bacteria</taxon>
        <taxon>Pseudomonadati</taxon>
        <taxon>Thermodesulfobacteriota</taxon>
        <taxon>Desulfovibrionia</taxon>
        <taxon>Desulfovibrionales</taxon>
        <taxon>Desulfovibrionaceae</taxon>
        <taxon>Nitratidesulfovibrio</taxon>
    </lineage>
</organism>
<sequence length="179" mass="20212">MTRLENIYREKVVPVLQKEFNYDSSMQVPGIVKVSLNIGLGAASQNNKLMEEALKELTVIAGQKAVVTRAKKSIASFKLREGMPIGCRVTLRKERMWDFLDKLINFALPRVRDFRGVPDRGFDGRGNFTLGIKEHAIFPEMEADRVENPKGMNITIVTTATTDKEGKLLLDQLGMPFRK</sequence>
<comment type="function">
    <text evidence="1">This is one of the proteins that bind and probably mediate the attachment of the 5S RNA into the large ribosomal subunit, where it forms part of the central protuberance. In the 70S ribosome it contacts protein S13 of the 30S subunit (bridge B1b), connecting the 2 subunits; this bridge is implicated in subunit movement. Contacts the P site tRNA; the 5S rRNA and some of its associated proteins might help stabilize positioning of ribosome-bound tRNAs.</text>
</comment>
<comment type="subunit">
    <text evidence="1">Part of the 50S ribosomal subunit; part of the 5S rRNA/L5/L18/L25 subcomplex. Contacts the 5S rRNA and the P site tRNA. Forms a bridge to the 30S subunit in the 70S ribosome.</text>
</comment>
<comment type="similarity">
    <text evidence="1">Belongs to the universal ribosomal protein uL5 family.</text>
</comment>
<protein>
    <recommendedName>
        <fullName evidence="1">Large ribosomal subunit protein uL5</fullName>
    </recommendedName>
    <alternativeName>
        <fullName evidence="2">50S ribosomal protein L5</fullName>
    </alternativeName>
</protein>
<dbReference type="EMBL" id="CP000527">
    <property type="protein sequence ID" value="ABM28770.1"/>
    <property type="molecule type" value="Genomic_DNA"/>
</dbReference>
<dbReference type="RefSeq" id="WP_010938610.1">
    <property type="nucleotide sequence ID" value="NC_008751.1"/>
</dbReference>
<dbReference type="SMR" id="A1VEA4"/>
<dbReference type="KEGG" id="dvl:Dvul_1753"/>
<dbReference type="HOGENOM" id="CLU_061015_2_1_7"/>
<dbReference type="Proteomes" id="UP000009173">
    <property type="component" value="Chromosome"/>
</dbReference>
<dbReference type="GO" id="GO:1990904">
    <property type="term" value="C:ribonucleoprotein complex"/>
    <property type="evidence" value="ECO:0007669"/>
    <property type="project" value="UniProtKB-KW"/>
</dbReference>
<dbReference type="GO" id="GO:0005840">
    <property type="term" value="C:ribosome"/>
    <property type="evidence" value="ECO:0007669"/>
    <property type="project" value="UniProtKB-KW"/>
</dbReference>
<dbReference type="GO" id="GO:0019843">
    <property type="term" value="F:rRNA binding"/>
    <property type="evidence" value="ECO:0007669"/>
    <property type="project" value="UniProtKB-UniRule"/>
</dbReference>
<dbReference type="GO" id="GO:0003735">
    <property type="term" value="F:structural constituent of ribosome"/>
    <property type="evidence" value="ECO:0007669"/>
    <property type="project" value="InterPro"/>
</dbReference>
<dbReference type="GO" id="GO:0000049">
    <property type="term" value="F:tRNA binding"/>
    <property type="evidence" value="ECO:0007669"/>
    <property type="project" value="UniProtKB-UniRule"/>
</dbReference>
<dbReference type="GO" id="GO:0006412">
    <property type="term" value="P:translation"/>
    <property type="evidence" value="ECO:0007669"/>
    <property type="project" value="UniProtKB-UniRule"/>
</dbReference>
<dbReference type="FunFam" id="3.30.1440.10:FF:000001">
    <property type="entry name" value="50S ribosomal protein L5"/>
    <property type="match status" value="1"/>
</dbReference>
<dbReference type="Gene3D" id="3.30.1440.10">
    <property type="match status" value="1"/>
</dbReference>
<dbReference type="HAMAP" id="MF_01333_B">
    <property type="entry name" value="Ribosomal_uL5_B"/>
    <property type="match status" value="1"/>
</dbReference>
<dbReference type="InterPro" id="IPR002132">
    <property type="entry name" value="Ribosomal_uL5"/>
</dbReference>
<dbReference type="InterPro" id="IPR020930">
    <property type="entry name" value="Ribosomal_uL5_bac-type"/>
</dbReference>
<dbReference type="InterPro" id="IPR031309">
    <property type="entry name" value="Ribosomal_uL5_C"/>
</dbReference>
<dbReference type="InterPro" id="IPR020929">
    <property type="entry name" value="Ribosomal_uL5_CS"/>
</dbReference>
<dbReference type="InterPro" id="IPR022803">
    <property type="entry name" value="Ribosomal_uL5_dom_sf"/>
</dbReference>
<dbReference type="InterPro" id="IPR031310">
    <property type="entry name" value="Ribosomal_uL5_N"/>
</dbReference>
<dbReference type="NCBIfam" id="NF000585">
    <property type="entry name" value="PRK00010.1"/>
    <property type="match status" value="1"/>
</dbReference>
<dbReference type="PANTHER" id="PTHR11994">
    <property type="entry name" value="60S RIBOSOMAL PROTEIN L11-RELATED"/>
    <property type="match status" value="1"/>
</dbReference>
<dbReference type="Pfam" id="PF00281">
    <property type="entry name" value="Ribosomal_L5"/>
    <property type="match status" value="1"/>
</dbReference>
<dbReference type="Pfam" id="PF00673">
    <property type="entry name" value="Ribosomal_L5_C"/>
    <property type="match status" value="1"/>
</dbReference>
<dbReference type="PIRSF" id="PIRSF002161">
    <property type="entry name" value="Ribosomal_L5"/>
    <property type="match status" value="1"/>
</dbReference>
<dbReference type="SUPFAM" id="SSF55282">
    <property type="entry name" value="RL5-like"/>
    <property type="match status" value="1"/>
</dbReference>
<dbReference type="PROSITE" id="PS00358">
    <property type="entry name" value="RIBOSOMAL_L5"/>
    <property type="match status" value="1"/>
</dbReference>
<accession>A1VEA4</accession>